<gene>
    <name evidence="1" type="primary">rpmB</name>
    <name type="ordered locus">OEOE_0446</name>
</gene>
<accession>Q04GL9</accession>
<sequence>MAKDAITGARTRFGNQRSHALNANRRSWKPNLQKVTVKINGDAAKTVYLTARTLRAGLKNGSIERV</sequence>
<dbReference type="EMBL" id="CP000411">
    <property type="protein sequence ID" value="ABJ56403.1"/>
    <property type="molecule type" value="Genomic_DNA"/>
</dbReference>
<dbReference type="RefSeq" id="WP_002817821.1">
    <property type="nucleotide sequence ID" value="NC_008528.1"/>
</dbReference>
<dbReference type="SMR" id="Q04GL9"/>
<dbReference type="STRING" id="203123.OEOE_0446"/>
<dbReference type="GeneID" id="75065239"/>
<dbReference type="KEGG" id="ooe:OEOE_0446"/>
<dbReference type="eggNOG" id="COG0227">
    <property type="taxonomic scope" value="Bacteria"/>
</dbReference>
<dbReference type="HOGENOM" id="CLU_064548_7_1_9"/>
<dbReference type="Proteomes" id="UP000000774">
    <property type="component" value="Chromosome"/>
</dbReference>
<dbReference type="GO" id="GO:1990904">
    <property type="term" value="C:ribonucleoprotein complex"/>
    <property type="evidence" value="ECO:0007669"/>
    <property type="project" value="UniProtKB-KW"/>
</dbReference>
<dbReference type="GO" id="GO:0005840">
    <property type="term" value="C:ribosome"/>
    <property type="evidence" value="ECO:0007669"/>
    <property type="project" value="UniProtKB-KW"/>
</dbReference>
<dbReference type="GO" id="GO:0003735">
    <property type="term" value="F:structural constituent of ribosome"/>
    <property type="evidence" value="ECO:0007669"/>
    <property type="project" value="InterPro"/>
</dbReference>
<dbReference type="GO" id="GO:0006412">
    <property type="term" value="P:translation"/>
    <property type="evidence" value="ECO:0007669"/>
    <property type="project" value="UniProtKB-UniRule"/>
</dbReference>
<dbReference type="Gene3D" id="2.30.170.40">
    <property type="entry name" value="Ribosomal protein L28/L24"/>
    <property type="match status" value="1"/>
</dbReference>
<dbReference type="HAMAP" id="MF_00373">
    <property type="entry name" value="Ribosomal_bL28"/>
    <property type="match status" value="1"/>
</dbReference>
<dbReference type="InterPro" id="IPR050096">
    <property type="entry name" value="Bacterial_rp_bL28"/>
</dbReference>
<dbReference type="InterPro" id="IPR026569">
    <property type="entry name" value="Ribosomal_bL28"/>
</dbReference>
<dbReference type="InterPro" id="IPR034704">
    <property type="entry name" value="Ribosomal_bL28/bL31-like_sf"/>
</dbReference>
<dbReference type="InterPro" id="IPR001383">
    <property type="entry name" value="Ribosomal_bL28_bact-type"/>
</dbReference>
<dbReference type="InterPro" id="IPR037147">
    <property type="entry name" value="Ribosomal_bL28_sf"/>
</dbReference>
<dbReference type="NCBIfam" id="TIGR00009">
    <property type="entry name" value="L28"/>
    <property type="match status" value="1"/>
</dbReference>
<dbReference type="PANTHER" id="PTHR39080">
    <property type="entry name" value="50S RIBOSOMAL PROTEIN L28"/>
    <property type="match status" value="1"/>
</dbReference>
<dbReference type="PANTHER" id="PTHR39080:SF1">
    <property type="entry name" value="LARGE RIBOSOMAL SUBUNIT PROTEIN BL28A"/>
    <property type="match status" value="1"/>
</dbReference>
<dbReference type="Pfam" id="PF00830">
    <property type="entry name" value="Ribosomal_L28"/>
    <property type="match status" value="1"/>
</dbReference>
<dbReference type="SUPFAM" id="SSF143800">
    <property type="entry name" value="L28p-like"/>
    <property type="match status" value="1"/>
</dbReference>
<reference key="1">
    <citation type="journal article" date="2006" name="Proc. Natl. Acad. Sci. U.S.A.">
        <title>Comparative genomics of the lactic acid bacteria.</title>
        <authorList>
            <person name="Makarova K.S."/>
            <person name="Slesarev A."/>
            <person name="Wolf Y.I."/>
            <person name="Sorokin A."/>
            <person name="Mirkin B."/>
            <person name="Koonin E.V."/>
            <person name="Pavlov A."/>
            <person name="Pavlova N."/>
            <person name="Karamychev V."/>
            <person name="Polouchine N."/>
            <person name="Shakhova V."/>
            <person name="Grigoriev I."/>
            <person name="Lou Y."/>
            <person name="Rohksar D."/>
            <person name="Lucas S."/>
            <person name="Huang K."/>
            <person name="Goodstein D.M."/>
            <person name="Hawkins T."/>
            <person name="Plengvidhya V."/>
            <person name="Welker D."/>
            <person name="Hughes J."/>
            <person name="Goh Y."/>
            <person name="Benson A."/>
            <person name="Baldwin K."/>
            <person name="Lee J.-H."/>
            <person name="Diaz-Muniz I."/>
            <person name="Dosti B."/>
            <person name="Smeianov V."/>
            <person name="Wechter W."/>
            <person name="Barabote R."/>
            <person name="Lorca G."/>
            <person name="Altermann E."/>
            <person name="Barrangou R."/>
            <person name="Ganesan B."/>
            <person name="Xie Y."/>
            <person name="Rawsthorne H."/>
            <person name="Tamir D."/>
            <person name="Parker C."/>
            <person name="Breidt F."/>
            <person name="Broadbent J.R."/>
            <person name="Hutkins R."/>
            <person name="O'Sullivan D."/>
            <person name="Steele J."/>
            <person name="Unlu G."/>
            <person name="Saier M.H. Jr."/>
            <person name="Klaenhammer T."/>
            <person name="Richardson P."/>
            <person name="Kozyavkin S."/>
            <person name="Weimer B.C."/>
            <person name="Mills D.A."/>
        </authorList>
    </citation>
    <scope>NUCLEOTIDE SEQUENCE [LARGE SCALE GENOMIC DNA]</scope>
    <source>
        <strain>ATCC BAA-331 / PSU-1</strain>
    </source>
</reference>
<proteinExistence type="inferred from homology"/>
<evidence type="ECO:0000255" key="1">
    <source>
        <dbReference type="HAMAP-Rule" id="MF_00373"/>
    </source>
</evidence>
<evidence type="ECO:0000305" key="2"/>
<comment type="similarity">
    <text evidence="1">Belongs to the bacterial ribosomal protein bL28 family.</text>
</comment>
<organism>
    <name type="scientific">Oenococcus oeni (strain ATCC BAA-331 / PSU-1)</name>
    <dbReference type="NCBI Taxonomy" id="203123"/>
    <lineage>
        <taxon>Bacteria</taxon>
        <taxon>Bacillati</taxon>
        <taxon>Bacillota</taxon>
        <taxon>Bacilli</taxon>
        <taxon>Lactobacillales</taxon>
        <taxon>Lactobacillaceae</taxon>
        <taxon>Oenococcus</taxon>
    </lineage>
</organism>
<protein>
    <recommendedName>
        <fullName evidence="1">Large ribosomal subunit protein bL28</fullName>
    </recommendedName>
    <alternativeName>
        <fullName evidence="2">50S ribosomal protein L28</fullName>
    </alternativeName>
</protein>
<feature type="chain" id="PRO_1000059954" description="Large ribosomal subunit protein bL28">
    <location>
        <begin position="1"/>
        <end position="66"/>
    </location>
</feature>
<name>RL28_OENOB</name>
<keyword id="KW-1185">Reference proteome</keyword>
<keyword id="KW-0687">Ribonucleoprotein</keyword>
<keyword id="KW-0689">Ribosomal protein</keyword>